<gene>
    <name type="primary">sodA</name>
    <name type="synonym">sod</name>
    <name type="ordered locus">OCU_01930</name>
</gene>
<evidence type="ECO:0000250" key="1"/>
<evidence type="ECO:0000305" key="2"/>
<accession>P46728</accession>
<accession>H8IJN4</accession>
<organism>
    <name type="scientific">Mycobacterium intracellulare (strain ATCC 13950 / DSM 43223 / JCM 6384 / NCTC 13025 / 3600)</name>
    <dbReference type="NCBI Taxonomy" id="487521"/>
    <lineage>
        <taxon>Bacteria</taxon>
        <taxon>Bacillati</taxon>
        <taxon>Actinomycetota</taxon>
        <taxon>Actinomycetes</taxon>
        <taxon>Mycobacteriales</taxon>
        <taxon>Mycobacteriaceae</taxon>
        <taxon>Mycobacterium</taxon>
        <taxon>Mycobacterium avium complex (MAC)</taxon>
    </lineage>
</organism>
<feature type="chain" id="PRO_0000160050" description="Superoxide dismutase [Mn]">
    <location>
        <begin position="1"/>
        <end position="207"/>
    </location>
</feature>
<feature type="binding site" evidence="1">
    <location>
        <position position="28"/>
    </location>
    <ligand>
        <name>Mn(2+)</name>
        <dbReference type="ChEBI" id="CHEBI:29035"/>
    </ligand>
</feature>
<feature type="binding site" evidence="1">
    <location>
        <position position="76"/>
    </location>
    <ligand>
        <name>Mn(2+)</name>
        <dbReference type="ChEBI" id="CHEBI:29035"/>
    </ligand>
</feature>
<feature type="binding site" evidence="1">
    <location>
        <position position="160"/>
    </location>
    <ligand>
        <name>Mn(2+)</name>
        <dbReference type="ChEBI" id="CHEBI:29035"/>
    </ligand>
</feature>
<feature type="binding site" evidence="1">
    <location>
        <position position="164"/>
    </location>
    <ligand>
        <name>Mn(2+)</name>
        <dbReference type="ChEBI" id="CHEBI:29035"/>
    </ligand>
</feature>
<feature type="sequence variant" description="In strain: BC9405/90 / Serotype 18.">
    <original>H</original>
    <variation>S</variation>
    <location>
        <position position="28"/>
    </location>
</feature>
<feature type="sequence variant" description="In strain: ATCC 35847 / Serotype 7.">
    <original>S</original>
    <variation>T</variation>
    <location>
        <position position="30"/>
    </location>
</feature>
<feature type="sequence variant" description="In strain: BC9405/90 / Serotype 18.">
    <original>A</original>
    <variation>T</variation>
    <location>
        <position position="98"/>
    </location>
</feature>
<feature type="sequence variant" description="In strain: ATCC 35847 / Serotype 7.">
    <original>N</original>
    <variation>S</variation>
    <location>
        <position position="135"/>
    </location>
</feature>
<feature type="sequence conflict" description="In Ref. 2; CAA57150." evidence="2" ref="2">
    <original>I</original>
    <variation>L</variation>
    <location>
        <position position="27"/>
    </location>
</feature>
<feature type="sequence conflict" description="In Ref. 2; CAA57150." evidence="2" ref="2">
    <original>A</original>
    <variation>D</variation>
    <location>
        <position position="188"/>
    </location>
</feature>
<dbReference type="EC" id="1.15.1.1"/>
<dbReference type="EMBL" id="CP003322">
    <property type="protein sequence ID" value="AFC41413.1"/>
    <property type="molecule type" value="Genomic_DNA"/>
</dbReference>
<dbReference type="EMBL" id="X81387">
    <property type="protein sequence ID" value="CAA57150.1"/>
    <property type="molecule type" value="Genomic_DNA"/>
</dbReference>
<dbReference type="EMBL" id="Z48218">
    <property type="protein sequence ID" value="CAA88251.1"/>
    <property type="molecule type" value="Genomic_DNA"/>
</dbReference>
<dbReference type="EMBL" id="Z48217">
    <property type="protein sequence ID" value="CAA88250.1"/>
    <property type="molecule type" value="Genomic_DNA"/>
</dbReference>
<dbReference type="PIR" id="S52372">
    <property type="entry name" value="S52372"/>
</dbReference>
<dbReference type="RefSeq" id="WP_007771867.1">
    <property type="nucleotide sequence ID" value="NZ_CP076382.2"/>
</dbReference>
<dbReference type="SMR" id="P46728"/>
<dbReference type="KEGG" id="mia:OCU_01930"/>
<dbReference type="PATRIC" id="fig|487521.10.peg.195"/>
<dbReference type="eggNOG" id="COG0605">
    <property type="taxonomic scope" value="Bacteria"/>
</dbReference>
<dbReference type="HOGENOM" id="CLU_031625_2_2_11"/>
<dbReference type="Proteomes" id="UP000008004">
    <property type="component" value="Chromosome"/>
</dbReference>
<dbReference type="GO" id="GO:0046872">
    <property type="term" value="F:metal ion binding"/>
    <property type="evidence" value="ECO:0007669"/>
    <property type="project" value="UniProtKB-KW"/>
</dbReference>
<dbReference type="GO" id="GO:0004784">
    <property type="term" value="F:superoxide dismutase activity"/>
    <property type="evidence" value="ECO:0007669"/>
    <property type="project" value="UniProtKB-EC"/>
</dbReference>
<dbReference type="FunFam" id="1.10.287.990:FF:000001">
    <property type="entry name" value="Superoxide dismutase"/>
    <property type="match status" value="1"/>
</dbReference>
<dbReference type="FunFam" id="3.55.40.20:FF:000004">
    <property type="entry name" value="Superoxide dismutase [Fe]"/>
    <property type="match status" value="1"/>
</dbReference>
<dbReference type="Gene3D" id="1.10.287.990">
    <property type="entry name" value="Fe,Mn superoxide dismutase (SOD) domain"/>
    <property type="match status" value="1"/>
</dbReference>
<dbReference type="Gene3D" id="3.55.40.20">
    <property type="entry name" value="Iron/manganese superoxide dismutase, C-terminal domain"/>
    <property type="match status" value="1"/>
</dbReference>
<dbReference type="InterPro" id="IPR050265">
    <property type="entry name" value="Fe/Mn_Superoxide_Dismutase"/>
</dbReference>
<dbReference type="InterPro" id="IPR001189">
    <property type="entry name" value="Mn/Fe_SOD"/>
</dbReference>
<dbReference type="InterPro" id="IPR019833">
    <property type="entry name" value="Mn/Fe_SOD_BS"/>
</dbReference>
<dbReference type="InterPro" id="IPR019832">
    <property type="entry name" value="Mn/Fe_SOD_C"/>
</dbReference>
<dbReference type="InterPro" id="IPR019831">
    <property type="entry name" value="Mn/Fe_SOD_N"/>
</dbReference>
<dbReference type="InterPro" id="IPR036324">
    <property type="entry name" value="Mn/Fe_SOD_N_sf"/>
</dbReference>
<dbReference type="InterPro" id="IPR036314">
    <property type="entry name" value="SOD_C_sf"/>
</dbReference>
<dbReference type="PANTHER" id="PTHR11404">
    <property type="entry name" value="SUPEROXIDE DISMUTASE 2"/>
    <property type="match status" value="1"/>
</dbReference>
<dbReference type="PANTHER" id="PTHR11404:SF6">
    <property type="entry name" value="SUPEROXIDE DISMUTASE [MN], MITOCHONDRIAL"/>
    <property type="match status" value="1"/>
</dbReference>
<dbReference type="Pfam" id="PF02777">
    <property type="entry name" value="Sod_Fe_C"/>
    <property type="match status" value="1"/>
</dbReference>
<dbReference type="Pfam" id="PF00081">
    <property type="entry name" value="Sod_Fe_N"/>
    <property type="match status" value="1"/>
</dbReference>
<dbReference type="PIRSF" id="PIRSF000349">
    <property type="entry name" value="SODismutase"/>
    <property type="match status" value="1"/>
</dbReference>
<dbReference type="PRINTS" id="PR01703">
    <property type="entry name" value="MNSODISMTASE"/>
</dbReference>
<dbReference type="SUPFAM" id="SSF54719">
    <property type="entry name" value="Fe,Mn superoxide dismutase (SOD), C-terminal domain"/>
    <property type="match status" value="1"/>
</dbReference>
<dbReference type="SUPFAM" id="SSF46609">
    <property type="entry name" value="Fe,Mn superoxide dismutase (SOD), N-terminal domain"/>
    <property type="match status" value="1"/>
</dbReference>
<dbReference type="PROSITE" id="PS00088">
    <property type="entry name" value="SOD_MN"/>
    <property type="match status" value="1"/>
</dbReference>
<reference key="1">
    <citation type="journal article" date="2012" name="J. Bacteriol.">
        <title>Complete genome sequence of Mycobacterium intracellulare strain ATCC 13950T.</title>
        <authorList>
            <person name="Kim B.J."/>
            <person name="Choi B.S."/>
            <person name="Lim J.S."/>
            <person name="Choi I.Y."/>
            <person name="Lee J.H."/>
            <person name="Chun J."/>
            <person name="Kook Y.H."/>
            <person name="Kim B.J."/>
        </authorList>
    </citation>
    <scope>NUCLEOTIDE SEQUENCE [LARGE SCALE GENOMIC DNA]</scope>
    <source>
        <strain>ATCC 13950 / DSM 43223 / JCM 6384 / NCTC 13025 / 3600</strain>
    </source>
</reference>
<reference key="2">
    <citation type="journal article" date="1994" name="J. Clin. Microbiol.">
        <title>The superoxide dismutase gene, a target for detection and identification of mycobacteria by PCR.</title>
        <authorList>
            <person name="Zolg J.W."/>
            <person name="Philippi-Schulz S."/>
        </authorList>
    </citation>
    <scope>NUCLEOTIDE SEQUENCE [GENOMIC DNA] OF 27-189</scope>
    <source>
        <strain>ATCC 13950 / DSM 43223 / JCM 6384 / NCTC 13025 / 3600</strain>
    </source>
</reference>
<reference key="3">
    <citation type="journal article" date="1995" name="Clin. Mol. Pathol.">
        <title>Rapid identification of mycobacteria from AIDS patients by capillary electrophoretic profiling of amplified SOD gene.</title>
        <authorList>
            <person name="Bull T.J."/>
            <person name="Shanson D.C."/>
            <person name="Archard L.C."/>
        </authorList>
    </citation>
    <scope>NUCLEOTIDE SEQUENCE [GENOMIC DNA] OF 28-165</scope>
    <source>
        <strain>ATCC 35847 / TMC 1476 / Serotype 7</strain>
        <strain>BC9405/90 / Serotype 18</strain>
    </source>
</reference>
<sequence>MAEYTLPDLDWDYAALEPHISGQINEIHHSKHHATYVKGVNDALSKLEEARANEDHAAIFLNEKNLAFHLGGHVNHSIWWKNLSPDGGDKPTGELAAAIDDAFGSFDRFRAQFSAAANGLQGSGWAVLGYDTLGNRLLTFQLYDQQANVPLGIIPLLQVDMWEHAFYLQYKNVKADYVKAFWNVVNWADVQKRYAAATSKTQGLIFG</sequence>
<keyword id="KW-0464">Manganese</keyword>
<keyword id="KW-0479">Metal-binding</keyword>
<keyword id="KW-0560">Oxidoreductase</keyword>
<name>SODM_MYCIA</name>
<comment type="function">
    <text>Destroys superoxide anion radicals which are normally produced within the cells and which are toxic to biological systems.</text>
</comment>
<comment type="catalytic activity">
    <reaction>
        <text>2 superoxide + 2 H(+) = H2O2 + O2</text>
        <dbReference type="Rhea" id="RHEA:20696"/>
        <dbReference type="ChEBI" id="CHEBI:15378"/>
        <dbReference type="ChEBI" id="CHEBI:15379"/>
        <dbReference type="ChEBI" id="CHEBI:16240"/>
        <dbReference type="ChEBI" id="CHEBI:18421"/>
        <dbReference type="EC" id="1.15.1.1"/>
    </reaction>
</comment>
<comment type="cofactor">
    <cofactor evidence="1">
        <name>Mn(2+)</name>
        <dbReference type="ChEBI" id="CHEBI:29035"/>
    </cofactor>
    <text evidence="1">Binds 1 Mn(2+) ion per subunit.</text>
</comment>
<comment type="similarity">
    <text evidence="2">Belongs to the iron/manganese superoxide dismutase family.</text>
</comment>
<protein>
    <recommendedName>
        <fullName>Superoxide dismutase [Mn]</fullName>
        <ecNumber>1.15.1.1</ecNumber>
    </recommendedName>
</protein>
<proteinExistence type="inferred from homology"/>